<reference key="1">
    <citation type="journal article" date="2008" name="J. Bacteriol.">
        <title>Genome sequence of the fish pathogen Renibacterium salmoninarum suggests reductive evolution away from an environmental Arthrobacter ancestor.</title>
        <authorList>
            <person name="Wiens G.D."/>
            <person name="Rockey D.D."/>
            <person name="Wu Z."/>
            <person name="Chang J."/>
            <person name="Levy R."/>
            <person name="Crane S."/>
            <person name="Chen D.S."/>
            <person name="Capri G.R."/>
            <person name="Burnett J.R."/>
            <person name="Sudheesh P.S."/>
            <person name="Schipma M.J."/>
            <person name="Burd H."/>
            <person name="Bhattacharyya A."/>
            <person name="Rhodes L.D."/>
            <person name="Kaul R."/>
            <person name="Strom M.S."/>
        </authorList>
    </citation>
    <scope>NUCLEOTIDE SEQUENCE [LARGE SCALE GENOMIC DNA]</scope>
    <source>
        <strain>ATCC 33209 / DSM 20767 / JCM 11484 / NBRC 15589 / NCIMB 2235</strain>
    </source>
</reference>
<keyword id="KW-0067">ATP-binding</keyword>
<keyword id="KW-1003">Cell membrane</keyword>
<keyword id="KW-0963">Cytoplasm</keyword>
<keyword id="KW-0472">Membrane</keyword>
<keyword id="KW-0547">Nucleotide-binding</keyword>
<keyword id="KW-0653">Protein transport</keyword>
<keyword id="KW-1185">Reference proteome</keyword>
<keyword id="KW-1278">Translocase</keyword>
<keyword id="KW-0811">Translocation</keyword>
<keyword id="KW-0813">Transport</keyword>
<protein>
    <recommendedName>
        <fullName evidence="1">Protein translocase subunit SecA</fullName>
        <ecNumber evidence="1">7.4.2.8</ecNumber>
    </recommendedName>
</protein>
<organism>
    <name type="scientific">Renibacterium salmoninarum (strain ATCC 33209 / DSM 20767 / JCM 11484 / NBRC 15589 / NCIMB 2235)</name>
    <dbReference type="NCBI Taxonomy" id="288705"/>
    <lineage>
        <taxon>Bacteria</taxon>
        <taxon>Bacillati</taxon>
        <taxon>Actinomycetota</taxon>
        <taxon>Actinomycetes</taxon>
        <taxon>Micrococcales</taxon>
        <taxon>Micrococcaceae</taxon>
        <taxon>Renibacterium</taxon>
    </lineage>
</organism>
<name>SECA_RENSM</name>
<comment type="function">
    <text evidence="1">Part of the Sec protein translocase complex. Interacts with the SecYEG preprotein conducting channel. Has a central role in coupling the hydrolysis of ATP to the transfer of proteins into and across the cell membrane, serving as an ATP-driven molecular motor driving the stepwise translocation of polypeptide chains across the membrane.</text>
</comment>
<comment type="catalytic activity">
    <reaction evidence="1">
        <text>ATP + H2O + cellular proteinSide 1 = ADP + phosphate + cellular proteinSide 2.</text>
        <dbReference type="EC" id="7.4.2.8"/>
    </reaction>
</comment>
<comment type="subunit">
    <text evidence="1">Monomer and homodimer. Part of the essential Sec protein translocation apparatus which comprises SecA, SecYEG and auxiliary proteins SecDF. Other proteins may also be involved.</text>
</comment>
<comment type="subcellular location">
    <subcellularLocation>
        <location evidence="1">Cell membrane</location>
        <topology evidence="1">Peripheral membrane protein</topology>
        <orientation evidence="1">Cytoplasmic side</orientation>
    </subcellularLocation>
    <subcellularLocation>
        <location evidence="1">Cytoplasm</location>
    </subcellularLocation>
    <text evidence="1">Distribution is 50-50.</text>
</comment>
<comment type="similarity">
    <text evidence="1">Belongs to the SecA family.</text>
</comment>
<dbReference type="EC" id="7.4.2.8" evidence="1"/>
<dbReference type="EMBL" id="CP000910">
    <property type="protein sequence ID" value="ABY23367.1"/>
    <property type="molecule type" value="Genomic_DNA"/>
</dbReference>
<dbReference type="RefSeq" id="WP_012245042.1">
    <property type="nucleotide sequence ID" value="NC_010168.1"/>
</dbReference>
<dbReference type="SMR" id="A9WMN9"/>
<dbReference type="STRING" id="288705.RSal33209_1631"/>
<dbReference type="KEGG" id="rsa:RSal33209_1631"/>
<dbReference type="eggNOG" id="COG0653">
    <property type="taxonomic scope" value="Bacteria"/>
</dbReference>
<dbReference type="HOGENOM" id="CLU_005314_3_0_11"/>
<dbReference type="Proteomes" id="UP000002007">
    <property type="component" value="Chromosome"/>
</dbReference>
<dbReference type="GO" id="GO:0031522">
    <property type="term" value="C:cell envelope Sec protein transport complex"/>
    <property type="evidence" value="ECO:0007669"/>
    <property type="project" value="TreeGrafter"/>
</dbReference>
<dbReference type="GO" id="GO:0005829">
    <property type="term" value="C:cytosol"/>
    <property type="evidence" value="ECO:0007669"/>
    <property type="project" value="TreeGrafter"/>
</dbReference>
<dbReference type="GO" id="GO:0005886">
    <property type="term" value="C:plasma membrane"/>
    <property type="evidence" value="ECO:0007669"/>
    <property type="project" value="UniProtKB-SubCell"/>
</dbReference>
<dbReference type="GO" id="GO:0005524">
    <property type="term" value="F:ATP binding"/>
    <property type="evidence" value="ECO:0007669"/>
    <property type="project" value="UniProtKB-UniRule"/>
</dbReference>
<dbReference type="GO" id="GO:0008564">
    <property type="term" value="F:protein-exporting ATPase activity"/>
    <property type="evidence" value="ECO:0007669"/>
    <property type="project" value="UniProtKB-EC"/>
</dbReference>
<dbReference type="GO" id="GO:0065002">
    <property type="term" value="P:intracellular protein transmembrane transport"/>
    <property type="evidence" value="ECO:0007669"/>
    <property type="project" value="UniProtKB-UniRule"/>
</dbReference>
<dbReference type="GO" id="GO:0017038">
    <property type="term" value="P:protein import"/>
    <property type="evidence" value="ECO:0007669"/>
    <property type="project" value="InterPro"/>
</dbReference>
<dbReference type="GO" id="GO:0006605">
    <property type="term" value="P:protein targeting"/>
    <property type="evidence" value="ECO:0007669"/>
    <property type="project" value="UniProtKB-UniRule"/>
</dbReference>
<dbReference type="GO" id="GO:0043952">
    <property type="term" value="P:protein transport by the Sec complex"/>
    <property type="evidence" value="ECO:0007669"/>
    <property type="project" value="TreeGrafter"/>
</dbReference>
<dbReference type="CDD" id="cd17928">
    <property type="entry name" value="DEXDc_SecA"/>
    <property type="match status" value="1"/>
</dbReference>
<dbReference type="CDD" id="cd18803">
    <property type="entry name" value="SF2_C_secA"/>
    <property type="match status" value="1"/>
</dbReference>
<dbReference type="FunFam" id="1.10.3060.10:FF:000002">
    <property type="entry name" value="Preprotein translocase subunit SecA"/>
    <property type="match status" value="1"/>
</dbReference>
<dbReference type="FunFam" id="3.40.50.300:FF:000113">
    <property type="entry name" value="Preprotein translocase subunit SecA"/>
    <property type="match status" value="1"/>
</dbReference>
<dbReference type="FunFam" id="3.40.50.300:FF:000334">
    <property type="entry name" value="Protein translocase subunit SecA"/>
    <property type="match status" value="1"/>
</dbReference>
<dbReference type="FunFam" id="3.90.1440.10:FF:000002">
    <property type="entry name" value="Protein translocase subunit SecA"/>
    <property type="match status" value="1"/>
</dbReference>
<dbReference type="Gene3D" id="1.10.3060.10">
    <property type="entry name" value="Helical scaffold and wing domains of SecA"/>
    <property type="match status" value="1"/>
</dbReference>
<dbReference type="Gene3D" id="3.40.50.300">
    <property type="entry name" value="P-loop containing nucleotide triphosphate hydrolases"/>
    <property type="match status" value="2"/>
</dbReference>
<dbReference type="Gene3D" id="3.90.1440.10">
    <property type="entry name" value="SecA, preprotein cross-linking domain"/>
    <property type="match status" value="1"/>
</dbReference>
<dbReference type="HAMAP" id="MF_01382">
    <property type="entry name" value="SecA"/>
    <property type="match status" value="1"/>
</dbReference>
<dbReference type="InterPro" id="IPR014001">
    <property type="entry name" value="Helicase_ATP-bd"/>
</dbReference>
<dbReference type="InterPro" id="IPR001650">
    <property type="entry name" value="Helicase_C-like"/>
</dbReference>
<dbReference type="InterPro" id="IPR027417">
    <property type="entry name" value="P-loop_NTPase"/>
</dbReference>
<dbReference type="InterPro" id="IPR000185">
    <property type="entry name" value="SecA"/>
</dbReference>
<dbReference type="InterPro" id="IPR020937">
    <property type="entry name" value="SecA_CS"/>
</dbReference>
<dbReference type="InterPro" id="IPR011115">
    <property type="entry name" value="SecA_DEAD"/>
</dbReference>
<dbReference type="InterPro" id="IPR014018">
    <property type="entry name" value="SecA_motor_DEAD"/>
</dbReference>
<dbReference type="InterPro" id="IPR011130">
    <property type="entry name" value="SecA_preprotein_X-link_dom"/>
</dbReference>
<dbReference type="InterPro" id="IPR044722">
    <property type="entry name" value="SecA_SF2_C"/>
</dbReference>
<dbReference type="InterPro" id="IPR011116">
    <property type="entry name" value="SecA_Wing/Scaffold"/>
</dbReference>
<dbReference type="InterPro" id="IPR036266">
    <property type="entry name" value="SecA_Wing/Scaffold_sf"/>
</dbReference>
<dbReference type="InterPro" id="IPR036670">
    <property type="entry name" value="SecA_X-link_sf"/>
</dbReference>
<dbReference type="NCBIfam" id="NF009538">
    <property type="entry name" value="PRK12904.1"/>
    <property type="match status" value="1"/>
</dbReference>
<dbReference type="NCBIfam" id="TIGR00963">
    <property type="entry name" value="secA"/>
    <property type="match status" value="1"/>
</dbReference>
<dbReference type="PANTHER" id="PTHR30612:SF0">
    <property type="entry name" value="CHLOROPLAST PROTEIN-TRANSPORTING ATPASE"/>
    <property type="match status" value="1"/>
</dbReference>
<dbReference type="PANTHER" id="PTHR30612">
    <property type="entry name" value="SECA INNER MEMBRANE COMPONENT OF SEC PROTEIN SECRETION SYSTEM"/>
    <property type="match status" value="1"/>
</dbReference>
<dbReference type="Pfam" id="PF21090">
    <property type="entry name" value="P-loop_SecA"/>
    <property type="match status" value="1"/>
</dbReference>
<dbReference type="Pfam" id="PF07517">
    <property type="entry name" value="SecA_DEAD"/>
    <property type="match status" value="1"/>
</dbReference>
<dbReference type="Pfam" id="PF01043">
    <property type="entry name" value="SecA_PP_bind"/>
    <property type="match status" value="1"/>
</dbReference>
<dbReference type="Pfam" id="PF07516">
    <property type="entry name" value="SecA_SW"/>
    <property type="match status" value="1"/>
</dbReference>
<dbReference type="PRINTS" id="PR00906">
    <property type="entry name" value="SECA"/>
</dbReference>
<dbReference type="SMART" id="SM00957">
    <property type="entry name" value="SecA_DEAD"/>
    <property type="match status" value="1"/>
</dbReference>
<dbReference type="SMART" id="SM00958">
    <property type="entry name" value="SecA_PP_bind"/>
    <property type="match status" value="1"/>
</dbReference>
<dbReference type="SUPFAM" id="SSF81886">
    <property type="entry name" value="Helical scaffold and wing domains of SecA"/>
    <property type="match status" value="1"/>
</dbReference>
<dbReference type="SUPFAM" id="SSF52540">
    <property type="entry name" value="P-loop containing nucleoside triphosphate hydrolases"/>
    <property type="match status" value="2"/>
</dbReference>
<dbReference type="SUPFAM" id="SSF81767">
    <property type="entry name" value="Pre-protein crosslinking domain of SecA"/>
    <property type="match status" value="1"/>
</dbReference>
<dbReference type="PROSITE" id="PS01312">
    <property type="entry name" value="SECA"/>
    <property type="match status" value="1"/>
</dbReference>
<dbReference type="PROSITE" id="PS51196">
    <property type="entry name" value="SECA_MOTOR_DEAD"/>
    <property type="match status" value="1"/>
</dbReference>
<gene>
    <name evidence="1" type="primary">secA</name>
    <name type="ordered locus">RSal33209_1631</name>
</gene>
<accession>A9WMN9</accession>
<feature type="chain" id="PRO_1000087327" description="Protein translocase subunit SecA">
    <location>
        <begin position="1"/>
        <end position="932"/>
    </location>
</feature>
<feature type="region of interest" description="Disordered" evidence="2">
    <location>
        <begin position="857"/>
        <end position="932"/>
    </location>
</feature>
<feature type="compositionally biased region" description="Polar residues" evidence="2">
    <location>
        <begin position="905"/>
        <end position="915"/>
    </location>
</feature>
<feature type="compositionally biased region" description="Basic residues" evidence="2">
    <location>
        <begin position="920"/>
        <end position="932"/>
    </location>
</feature>
<feature type="binding site" evidence="1">
    <location>
        <position position="86"/>
    </location>
    <ligand>
        <name>ATP</name>
        <dbReference type="ChEBI" id="CHEBI:30616"/>
    </ligand>
</feature>
<feature type="binding site" evidence="1">
    <location>
        <begin position="104"/>
        <end position="108"/>
    </location>
    <ligand>
        <name>ATP</name>
        <dbReference type="ChEBI" id="CHEBI:30616"/>
    </ligand>
</feature>
<feature type="binding site" evidence="1">
    <location>
        <position position="494"/>
    </location>
    <ligand>
        <name>ATP</name>
        <dbReference type="ChEBI" id="CHEBI:30616"/>
    </ligand>
</feature>
<sequence>MPSLFEKILRTGDRKTLKRLHVYADAINTLEDSFQTFTDAELREETDKLRARHADGESLDDLLPEAFAAVREGSRRTLGMRQFDVQLMGGAALHLGNIAEMKTGEGKTLVATAPAYLNGLSGKGVHIVTTNDYLASYQSELMGRVHRFMGLTSGCILSAQEPSERRLQYAADVTYGTNNEFGFDYLRDNMAWSSEELVQRGHHFAIVDEVDSILIDEARTPLIISGPASGDANRWYGEFAKVVLRLDVDDDYEVDEKKRTVGVLEPGIEKVEDYLGISNLYESANTPLIGFLNNAIKAKELFKRDKDYVILDGEVLIVDEHTGRILAGRRYNEGMHQAIEAKESVEIKAENQTLATVTLQNYFRLYEKLSGMTGTAETEASEFMGTYELGVVAIPTNKPMVRIDQSDLVYKNEVVKFEAVVKDIEERHKEGQPVLVGTTSVEKSEYLSKQLSKLGIKHEVLNAKNHAREASIVAQAGRKGAVTVATNMAGRGTDIMLGGNAEFNAVTELAKRGLDPEETPEEYEAAWAEAYEKAQEATEEEHEEVVELGGLYVLGTERHESRRIDNQLRGRSGRQGDPGESRFYLSLTDDLMRLFNSGAAERLMGRSVMPDDQALESKLVSKAIASAQGQVEGRNAEQRKNVLKYDDVLNRQREAIYGDRRRILEGDDLHEKVQHFLEDTVNESIDATTAEGHAEGWDYKALWSSLGTLYPIGLTADDVAEEVGGLANVTSDVLKREILSDAKLAYQGREEKLGSETIRELERRVVLSVIGRKWQEHLYEMDYLKEGIGLRAMAQRDPLVEYQREGFVMFQAMMGAIREESVGFLFNLEVQVEEAPAASAGVQANQPSALLDRVNGEDAGAEAHASAKPVLNAPGLAEPERPSQLQFTAPDASGEAETRIERRSTAGSAGDSNLPPSARKTNKPAPKRKKRR</sequence>
<proteinExistence type="inferred from homology"/>
<evidence type="ECO:0000255" key="1">
    <source>
        <dbReference type="HAMAP-Rule" id="MF_01382"/>
    </source>
</evidence>
<evidence type="ECO:0000256" key="2">
    <source>
        <dbReference type="SAM" id="MobiDB-lite"/>
    </source>
</evidence>